<evidence type="ECO:0000255" key="1">
    <source>
        <dbReference type="HAMAP-Rule" id="MF_00380"/>
    </source>
</evidence>
<dbReference type="EMBL" id="CP001161">
    <property type="protein sequence ID" value="ACL30504.1"/>
    <property type="molecule type" value="Genomic_DNA"/>
</dbReference>
<dbReference type="RefSeq" id="WP_009874087.1">
    <property type="nucleotide sequence ID" value="NC_011833.1"/>
</dbReference>
<dbReference type="SMR" id="B8D8T2"/>
<dbReference type="KEGG" id="bap:BUAP5A_129"/>
<dbReference type="HOGENOM" id="CLU_105066_1_3_6"/>
<dbReference type="OrthoDB" id="9797747at2"/>
<dbReference type="Proteomes" id="UP000006904">
    <property type="component" value="Chromosome"/>
</dbReference>
<dbReference type="GO" id="GO:0005829">
    <property type="term" value="C:cytosol"/>
    <property type="evidence" value="ECO:0007669"/>
    <property type="project" value="TreeGrafter"/>
</dbReference>
<dbReference type="GO" id="GO:0003677">
    <property type="term" value="F:DNA binding"/>
    <property type="evidence" value="ECO:0007669"/>
    <property type="project" value="UniProtKB-UniRule"/>
</dbReference>
<dbReference type="GO" id="GO:0030527">
    <property type="term" value="F:structural constituent of chromatin"/>
    <property type="evidence" value="ECO:0007669"/>
    <property type="project" value="InterPro"/>
</dbReference>
<dbReference type="GO" id="GO:0006310">
    <property type="term" value="P:DNA recombination"/>
    <property type="evidence" value="ECO:0007669"/>
    <property type="project" value="UniProtKB-UniRule"/>
</dbReference>
<dbReference type="GO" id="GO:0009893">
    <property type="term" value="P:positive regulation of metabolic process"/>
    <property type="evidence" value="ECO:0007669"/>
    <property type="project" value="UniProtKB-ARBA"/>
</dbReference>
<dbReference type="GO" id="GO:0006355">
    <property type="term" value="P:regulation of DNA-templated transcription"/>
    <property type="evidence" value="ECO:0007669"/>
    <property type="project" value="UniProtKB-UniRule"/>
</dbReference>
<dbReference type="GO" id="GO:0006417">
    <property type="term" value="P:regulation of translation"/>
    <property type="evidence" value="ECO:0007669"/>
    <property type="project" value="UniProtKB-UniRule"/>
</dbReference>
<dbReference type="CDD" id="cd13835">
    <property type="entry name" value="IHF_A"/>
    <property type="match status" value="1"/>
</dbReference>
<dbReference type="Gene3D" id="4.10.520.10">
    <property type="entry name" value="IHF-like DNA-binding proteins"/>
    <property type="match status" value="1"/>
</dbReference>
<dbReference type="HAMAP" id="MF_00380">
    <property type="entry name" value="IHF_alpha"/>
    <property type="match status" value="1"/>
</dbReference>
<dbReference type="InterPro" id="IPR000119">
    <property type="entry name" value="Hist_DNA-bd"/>
</dbReference>
<dbReference type="InterPro" id="IPR020816">
    <property type="entry name" value="Histone-like_DNA-bd_CS"/>
</dbReference>
<dbReference type="InterPro" id="IPR010992">
    <property type="entry name" value="IHF-like_DNA-bd_dom_sf"/>
</dbReference>
<dbReference type="InterPro" id="IPR005684">
    <property type="entry name" value="IHF_alpha"/>
</dbReference>
<dbReference type="NCBIfam" id="TIGR00987">
    <property type="entry name" value="himA"/>
    <property type="match status" value="1"/>
</dbReference>
<dbReference type="NCBIfam" id="NF001401">
    <property type="entry name" value="PRK00285.1"/>
    <property type="match status" value="1"/>
</dbReference>
<dbReference type="PANTHER" id="PTHR33175">
    <property type="entry name" value="DNA-BINDING PROTEIN HU"/>
    <property type="match status" value="1"/>
</dbReference>
<dbReference type="PANTHER" id="PTHR33175:SF2">
    <property type="entry name" value="INTEGRATION HOST FACTOR SUBUNIT ALPHA"/>
    <property type="match status" value="1"/>
</dbReference>
<dbReference type="Pfam" id="PF00216">
    <property type="entry name" value="Bac_DNA_binding"/>
    <property type="match status" value="1"/>
</dbReference>
<dbReference type="PRINTS" id="PR01727">
    <property type="entry name" value="DNABINDINGHU"/>
</dbReference>
<dbReference type="SMART" id="SM00411">
    <property type="entry name" value="BHL"/>
    <property type="match status" value="1"/>
</dbReference>
<dbReference type="SUPFAM" id="SSF47729">
    <property type="entry name" value="IHF-like DNA-binding proteins"/>
    <property type="match status" value="1"/>
</dbReference>
<dbReference type="PROSITE" id="PS00045">
    <property type="entry name" value="HISTONE_LIKE"/>
    <property type="match status" value="1"/>
</dbReference>
<proteinExistence type="inferred from homology"/>
<feature type="chain" id="PRO_1000190419" description="Integration host factor subunit alpha">
    <location>
        <begin position="1"/>
        <end position="102"/>
    </location>
</feature>
<accession>B8D8T2</accession>
<comment type="function">
    <text evidence="1">This protein is one of the two subunits of integration host factor, a specific DNA-binding protein that functions in genetic recombination as well as in transcriptional and translational control.</text>
</comment>
<comment type="subunit">
    <text evidence="1">Heterodimer of an alpha and a beta chain.</text>
</comment>
<comment type="similarity">
    <text evidence="1">Belongs to the bacterial histone-like protein family.</text>
</comment>
<reference key="1">
    <citation type="journal article" date="2009" name="Science">
        <title>The dynamics and time scale of ongoing genomic erosion in symbiotic bacteria.</title>
        <authorList>
            <person name="Moran N.A."/>
            <person name="McLaughlin H.J."/>
            <person name="Sorek R."/>
        </authorList>
    </citation>
    <scope>NUCLEOTIDE SEQUENCE [LARGE SCALE GENOMIC DNA]</scope>
    <source>
        <strain>5A</strain>
    </source>
</reference>
<sequence length="102" mass="11840">MVLTKAAISENLFEKLQLTKKESKEFVEFFFEEVRKSLEKGEAVKLSGFGNFQIKKKKARPGRNPRTGEIFLITARRVVTFKAGQKLKNKINNYLIKKNNNF</sequence>
<organism>
    <name type="scientific">Buchnera aphidicola subsp. Acyrthosiphon pisum (strain 5A)</name>
    <dbReference type="NCBI Taxonomy" id="563178"/>
    <lineage>
        <taxon>Bacteria</taxon>
        <taxon>Pseudomonadati</taxon>
        <taxon>Pseudomonadota</taxon>
        <taxon>Gammaproteobacteria</taxon>
        <taxon>Enterobacterales</taxon>
        <taxon>Erwiniaceae</taxon>
        <taxon>Buchnera</taxon>
    </lineage>
</organism>
<name>IHFA_BUCA5</name>
<gene>
    <name evidence="1" type="primary">ihfA</name>
    <name evidence="1" type="synonym">himA</name>
    <name type="ordered locus">BUAP5A_129</name>
</gene>
<protein>
    <recommendedName>
        <fullName evidence="1">Integration host factor subunit alpha</fullName>
        <shortName evidence="1">IHF-alpha</shortName>
    </recommendedName>
</protein>
<keyword id="KW-0233">DNA recombination</keyword>
<keyword id="KW-0238">DNA-binding</keyword>
<keyword id="KW-0804">Transcription</keyword>
<keyword id="KW-0805">Transcription regulation</keyword>
<keyword id="KW-0810">Translation regulation</keyword>